<comment type="subunit">
    <text>Myosin is a hexamer of 2 heavy chains and 4 light chains.</text>
</comment>
<comment type="miscellaneous">
    <text>Light chain 23 is expressed in chicken embryonic skeletal, cardiac, smooth muscles and in brain continuously from embryo to adult.</text>
</comment>
<keyword id="KW-0505">Motor protein</keyword>
<keyword id="KW-0514">Muscle protein</keyword>
<keyword id="KW-0518">Myosin</keyword>
<keyword id="KW-1185">Reference proteome</keyword>
<keyword id="KW-0677">Repeat</keyword>
<name>MLEX_CHICK</name>
<dbReference type="EMBL" id="J02823">
    <property type="protein sequence ID" value="AAA48957.1"/>
    <property type="molecule type" value="mRNA"/>
</dbReference>
<dbReference type="EMBL" id="X14428">
    <property type="protein sequence ID" value="CAA32588.1"/>
    <property type="molecule type" value="Genomic_DNA"/>
</dbReference>
<dbReference type="EMBL" id="X14429">
    <property type="protein sequence ID" value="CAA32588.1"/>
    <property type="status" value="JOINED"/>
    <property type="molecule type" value="Genomic_DNA"/>
</dbReference>
<dbReference type="PIR" id="S02065">
    <property type="entry name" value="MOCH4E"/>
</dbReference>
<dbReference type="RefSeq" id="NP_990810.2">
    <property type="nucleotide sequence ID" value="NM_205479.3"/>
</dbReference>
<dbReference type="SMR" id="P09540"/>
<dbReference type="FunCoup" id="P09540">
    <property type="interactions" value="142"/>
</dbReference>
<dbReference type="STRING" id="9031.ENSGALP00000000815"/>
<dbReference type="PaxDb" id="9031-ENSGALP00000000815"/>
<dbReference type="GeneID" id="396472"/>
<dbReference type="KEGG" id="gga:396472"/>
<dbReference type="CTD" id="4635"/>
<dbReference type="VEuPathDB" id="HostDB:geneid_396472"/>
<dbReference type="eggNOG" id="KOG0030">
    <property type="taxonomic scope" value="Eukaryota"/>
</dbReference>
<dbReference type="InParanoid" id="P09540"/>
<dbReference type="OMA" id="PMFQHIA"/>
<dbReference type="OrthoDB" id="5959761at2759"/>
<dbReference type="PhylomeDB" id="P09540"/>
<dbReference type="PRO" id="PR:P09540"/>
<dbReference type="Proteomes" id="UP000000539">
    <property type="component" value="Unassembled WGS sequence"/>
</dbReference>
<dbReference type="GO" id="GO:0031672">
    <property type="term" value="C:A band"/>
    <property type="evidence" value="ECO:0000318"/>
    <property type="project" value="GO_Central"/>
</dbReference>
<dbReference type="GO" id="GO:0016460">
    <property type="term" value="C:myosin II complex"/>
    <property type="evidence" value="ECO:0000318"/>
    <property type="project" value="GO_Central"/>
</dbReference>
<dbReference type="GO" id="GO:0003785">
    <property type="term" value="F:actin monomer binding"/>
    <property type="evidence" value="ECO:0000318"/>
    <property type="project" value="GO_Central"/>
</dbReference>
<dbReference type="GO" id="GO:0005509">
    <property type="term" value="F:calcium ion binding"/>
    <property type="evidence" value="ECO:0007669"/>
    <property type="project" value="InterPro"/>
</dbReference>
<dbReference type="GO" id="GO:0060048">
    <property type="term" value="P:cardiac muscle contraction"/>
    <property type="evidence" value="ECO:0000318"/>
    <property type="project" value="GO_Central"/>
</dbReference>
<dbReference type="CDD" id="cd00051">
    <property type="entry name" value="EFh"/>
    <property type="match status" value="1"/>
</dbReference>
<dbReference type="FunFam" id="1.10.238.10:FF:000019">
    <property type="entry name" value="Myosin light chain 1 skeletal"/>
    <property type="match status" value="1"/>
</dbReference>
<dbReference type="FunFam" id="1.10.238.10:FF:000056">
    <property type="entry name" value="Myosin light chain 1 skeletal"/>
    <property type="match status" value="1"/>
</dbReference>
<dbReference type="Gene3D" id="1.10.238.10">
    <property type="entry name" value="EF-hand"/>
    <property type="match status" value="2"/>
</dbReference>
<dbReference type="InterPro" id="IPR050230">
    <property type="entry name" value="CALM/Myosin/TropC-like"/>
</dbReference>
<dbReference type="InterPro" id="IPR011992">
    <property type="entry name" value="EF-hand-dom_pair"/>
</dbReference>
<dbReference type="InterPro" id="IPR002048">
    <property type="entry name" value="EF_hand_dom"/>
</dbReference>
<dbReference type="PANTHER" id="PTHR23048">
    <property type="entry name" value="MYOSIN LIGHT CHAIN 1, 3"/>
    <property type="match status" value="1"/>
</dbReference>
<dbReference type="PANTHER" id="PTHR23048:SF1">
    <property type="entry name" value="MYOSIN LIGHT CHAIN 4"/>
    <property type="match status" value="1"/>
</dbReference>
<dbReference type="SUPFAM" id="SSF47473">
    <property type="entry name" value="EF-hand"/>
    <property type="match status" value="1"/>
</dbReference>
<dbReference type="PROSITE" id="PS50222">
    <property type="entry name" value="EF_HAND_2"/>
    <property type="match status" value="2"/>
</dbReference>
<protein>
    <recommendedName>
        <fullName>Myosin light chain, embryonic</fullName>
    </recommendedName>
    <alternativeName>
        <fullName>L23</fullName>
    </alternativeName>
</protein>
<organism>
    <name type="scientific">Gallus gallus</name>
    <name type="common">Chicken</name>
    <dbReference type="NCBI Taxonomy" id="9031"/>
    <lineage>
        <taxon>Eukaryota</taxon>
        <taxon>Metazoa</taxon>
        <taxon>Chordata</taxon>
        <taxon>Craniata</taxon>
        <taxon>Vertebrata</taxon>
        <taxon>Euteleostomi</taxon>
        <taxon>Archelosauria</taxon>
        <taxon>Archosauria</taxon>
        <taxon>Dinosauria</taxon>
        <taxon>Saurischia</taxon>
        <taxon>Theropoda</taxon>
        <taxon>Coelurosauria</taxon>
        <taxon>Aves</taxon>
        <taxon>Neognathae</taxon>
        <taxon>Galloanserae</taxon>
        <taxon>Galliformes</taxon>
        <taxon>Phasianidae</taxon>
        <taxon>Phasianinae</taxon>
        <taxon>Gallus</taxon>
    </lineage>
</organism>
<reference key="1">
    <citation type="journal article" date="1987" name="J. Biol. Chem.">
        <title>A common myosin light chain is expressed in chicken embryonic skeletal, cardiac, and smooth muscles and in brain continuously from embryo to adult.</title>
        <authorList>
            <person name="Kawashima M."/>
            <person name="Nabeshima Y."/>
            <person name="Obinata T."/>
            <person name="Fujii-Kuriyama Y."/>
        </authorList>
    </citation>
    <scope>NUCLEOTIDE SEQUENCE [MRNA]</scope>
</reference>
<reference key="2">
    <citation type="journal article" date="1988" name="J. Mol. Biol.">
        <title>Isolation of the chick myosin alkali light chain gene expressed in embryonic gizzard muscle and transitional expression of the light chain gene family in vivo.</title>
        <authorList>
            <person name="Nabeshima Y."/>
            <person name="Nabeshima Y."/>
            <person name="Kawashima M."/>
            <person name="Nakamura S."/>
            <person name="Nonomura Y."/>
            <person name="Fujii-Kuriyama Y."/>
        </authorList>
    </citation>
    <scope>NUCLEOTIDE SEQUENCE [GENOMIC DNA]</scope>
    <source>
        <tissue>Liver</tissue>
    </source>
</reference>
<accession>P09540</accession>
<accession>Q90897</accession>
<feature type="chain" id="PRO_0000198702" description="Myosin light chain, embryonic">
    <location>
        <begin position="1"/>
        <end position="185"/>
    </location>
</feature>
<feature type="domain" description="EF-hand 1" evidence="1">
    <location>
        <begin position="39"/>
        <end position="76"/>
    </location>
</feature>
<feature type="domain" description="EF-hand 2" evidence="1">
    <location>
        <begin position="118"/>
        <end position="153"/>
    </location>
</feature>
<feature type="domain" description="EF-hand 3" evidence="3">
    <location>
        <begin position="153"/>
        <end position="185"/>
    </location>
</feature>
<feature type="region of interest" description="Disordered" evidence="2">
    <location>
        <begin position="1"/>
        <end position="20"/>
    </location>
</feature>
<feature type="compositionally biased region" description="Basic and acidic residues" evidence="2">
    <location>
        <begin position="1"/>
        <end position="13"/>
    </location>
</feature>
<feature type="sequence conflict" description="In Ref. 2; CAA32588." evidence="3" ref="2">
    <original>L</original>
    <variation>M</variation>
    <location>
        <position position="94"/>
    </location>
</feature>
<proteinExistence type="evidence at transcript level"/>
<evidence type="ECO:0000255" key="1">
    <source>
        <dbReference type="PROSITE-ProRule" id="PRU00448"/>
    </source>
</evidence>
<evidence type="ECO:0000256" key="2">
    <source>
        <dbReference type="SAM" id="MobiDB-lite"/>
    </source>
</evidence>
<evidence type="ECO:0000305" key="3"/>
<sequence length="185" mass="20620">MPLKKPDPKKDAAKAAAAPEVPKEFTFDPKSVKIEFAAEQIEEFKEAFSLFDRTPTGAMQITYAQCGDVLRALGHNPTNAEVLKVLGKPKPEDLNTKMLDFETFLPILQHFTRNREQGTFEDFVEGLRVFDKEGNGLVMGAELRHVLVTLGEKMTESEVEQLMAGLEDANGCINYEAFVKHIMSG</sequence>